<protein>
    <recommendedName>
        <fullName>Dimethyladenosine transferase</fullName>
        <ecNumber>2.1.1.183</ecNumber>
    </recommendedName>
    <alternativeName>
        <fullName>18S rRNA (adenine(1779)-N(6)/adenine(1780)-N(6))-dimethyltransferase</fullName>
    </alternativeName>
    <alternativeName>
        <fullName>18S rRNA dimethylase</fullName>
    </alternativeName>
    <alternativeName>
        <fullName>S-adenosylmethionine-6-N', N'-adenosyl(rRNA) dimethyltransferase</fullName>
    </alternativeName>
</protein>
<keyword id="KW-0489">Methyltransferase</keyword>
<keyword id="KW-1185">Reference proteome</keyword>
<keyword id="KW-0694">RNA-binding</keyword>
<keyword id="KW-0698">rRNA processing</keyword>
<keyword id="KW-0949">S-adenosyl-L-methionine</keyword>
<keyword id="KW-0808">Transferase</keyword>
<comment type="function">
    <text>Specifically dimethylates two adjacent adenosines in the loop of a conserved hairpin near the 3'-end of 18S rRNA in the 40S particle.</text>
</comment>
<comment type="catalytic activity">
    <reaction>
        <text>adenosine(1779)/adenosine(1780) in 18S rRNA + 4 S-adenosyl-L-methionine = N(6)-dimethyladenosine(1779)/N(6)-dimethyladenosine(1780) in 18S rRNA + 4 S-adenosyl-L-homocysteine + 4 H(+)</text>
        <dbReference type="Rhea" id="RHEA:42780"/>
        <dbReference type="Rhea" id="RHEA-COMP:10234"/>
        <dbReference type="Rhea" id="RHEA-COMP:10236"/>
        <dbReference type="ChEBI" id="CHEBI:15378"/>
        <dbReference type="ChEBI" id="CHEBI:57856"/>
        <dbReference type="ChEBI" id="CHEBI:59789"/>
        <dbReference type="ChEBI" id="CHEBI:74411"/>
        <dbReference type="ChEBI" id="CHEBI:74493"/>
        <dbReference type="EC" id="2.1.1.183"/>
    </reaction>
</comment>
<comment type="similarity">
    <text evidence="1">Belongs to the class I-like SAM-binding methyltransferase superfamily. rRNA adenine N(6)-methyltransferase family.</text>
</comment>
<proteinExistence type="inferred from homology"/>
<reference key="1">
    <citation type="journal article" date="2004" name="Nature">
        <title>Genome evolution in yeasts.</title>
        <authorList>
            <person name="Dujon B."/>
            <person name="Sherman D."/>
            <person name="Fischer G."/>
            <person name="Durrens P."/>
            <person name="Casaregola S."/>
            <person name="Lafontaine I."/>
            <person name="de Montigny J."/>
            <person name="Marck C."/>
            <person name="Neuveglise C."/>
            <person name="Talla E."/>
            <person name="Goffard N."/>
            <person name="Frangeul L."/>
            <person name="Aigle M."/>
            <person name="Anthouard V."/>
            <person name="Babour A."/>
            <person name="Barbe V."/>
            <person name="Barnay S."/>
            <person name="Blanchin S."/>
            <person name="Beckerich J.-M."/>
            <person name="Beyne E."/>
            <person name="Bleykasten C."/>
            <person name="Boisrame A."/>
            <person name="Boyer J."/>
            <person name="Cattolico L."/>
            <person name="Confanioleri F."/>
            <person name="de Daruvar A."/>
            <person name="Despons L."/>
            <person name="Fabre E."/>
            <person name="Fairhead C."/>
            <person name="Ferry-Dumazet H."/>
            <person name="Groppi A."/>
            <person name="Hantraye F."/>
            <person name="Hennequin C."/>
            <person name="Jauniaux N."/>
            <person name="Joyet P."/>
            <person name="Kachouri R."/>
            <person name="Kerrest A."/>
            <person name="Koszul R."/>
            <person name="Lemaire M."/>
            <person name="Lesur I."/>
            <person name="Ma L."/>
            <person name="Muller H."/>
            <person name="Nicaud J.-M."/>
            <person name="Nikolski M."/>
            <person name="Oztas S."/>
            <person name="Ozier-Kalogeropoulos O."/>
            <person name="Pellenz S."/>
            <person name="Potier S."/>
            <person name="Richard G.-F."/>
            <person name="Straub M.-L."/>
            <person name="Suleau A."/>
            <person name="Swennen D."/>
            <person name="Tekaia F."/>
            <person name="Wesolowski-Louvel M."/>
            <person name="Westhof E."/>
            <person name="Wirth B."/>
            <person name="Zeniou-Meyer M."/>
            <person name="Zivanovic Y."/>
            <person name="Bolotin-Fukuhara M."/>
            <person name="Thierry A."/>
            <person name="Bouchier C."/>
            <person name="Caudron B."/>
            <person name="Scarpelli C."/>
            <person name="Gaillardin C."/>
            <person name="Weissenbach J."/>
            <person name="Wincker P."/>
            <person name="Souciet J.-L."/>
        </authorList>
    </citation>
    <scope>NUCLEOTIDE SEQUENCE [LARGE SCALE GENOMIC DNA]</scope>
    <source>
        <strain>CLIB 122 / E 150</strain>
    </source>
</reference>
<evidence type="ECO:0000255" key="1">
    <source>
        <dbReference type="PROSITE-ProRule" id="PRU01026"/>
    </source>
</evidence>
<evidence type="ECO:0000256" key="2">
    <source>
        <dbReference type="SAM" id="MobiDB-lite"/>
    </source>
</evidence>
<accession>Q6C7H6</accession>
<dbReference type="EC" id="2.1.1.183"/>
<dbReference type="EMBL" id="CR382131">
    <property type="protein sequence ID" value="CAG78965.1"/>
    <property type="molecule type" value="Genomic_DNA"/>
</dbReference>
<dbReference type="RefSeq" id="XP_503386.1">
    <property type="nucleotide sequence ID" value="XM_503386.1"/>
</dbReference>
<dbReference type="SMR" id="Q6C7H6"/>
<dbReference type="FunCoup" id="Q6C7H6">
    <property type="interactions" value="789"/>
</dbReference>
<dbReference type="STRING" id="284591.Q6C7H6"/>
<dbReference type="EnsemblFungi" id="CAG78965">
    <property type="protein sequence ID" value="CAG78965"/>
    <property type="gene ID" value="YALI0_E00770g"/>
</dbReference>
<dbReference type="KEGG" id="yli:2912893"/>
<dbReference type="VEuPathDB" id="FungiDB:YALI0_E00770g"/>
<dbReference type="HOGENOM" id="CLU_041220_2_0_1"/>
<dbReference type="InParanoid" id="Q6C7H6"/>
<dbReference type="OMA" id="GSEAYCR"/>
<dbReference type="OrthoDB" id="2239at4891"/>
<dbReference type="Proteomes" id="UP000001300">
    <property type="component" value="Chromosome E"/>
</dbReference>
<dbReference type="GO" id="GO:0052909">
    <property type="term" value="F:18S rRNA (adenine(1779)-N(6)/adenine(1780)-N(6))-dimethyltransferase activity"/>
    <property type="evidence" value="ECO:0007669"/>
    <property type="project" value="UniProtKB-EC"/>
</dbReference>
<dbReference type="GO" id="GO:0003723">
    <property type="term" value="F:RNA binding"/>
    <property type="evidence" value="ECO:0007669"/>
    <property type="project" value="UniProtKB-KW"/>
</dbReference>
<dbReference type="GO" id="GO:0000179">
    <property type="term" value="F:rRNA (adenine-N6,N6-)-dimethyltransferase activity"/>
    <property type="evidence" value="ECO:0000318"/>
    <property type="project" value="GO_Central"/>
</dbReference>
<dbReference type="GO" id="GO:0031167">
    <property type="term" value="P:rRNA methylation"/>
    <property type="evidence" value="ECO:0000318"/>
    <property type="project" value="GO_Central"/>
</dbReference>
<dbReference type="CDD" id="cd02440">
    <property type="entry name" value="AdoMet_MTases"/>
    <property type="match status" value="1"/>
</dbReference>
<dbReference type="FunFam" id="1.10.8.480:FF:000002">
    <property type="entry name" value="rRNA adenine N(6)-methyltransferase"/>
    <property type="match status" value="1"/>
</dbReference>
<dbReference type="FunFam" id="3.40.50.150:FF:000007">
    <property type="entry name" value="rRNA adenine N(6)-methyltransferase"/>
    <property type="match status" value="1"/>
</dbReference>
<dbReference type="Gene3D" id="1.10.8.480">
    <property type="match status" value="1"/>
</dbReference>
<dbReference type="Gene3D" id="3.40.50.150">
    <property type="entry name" value="Vaccinia Virus protein VP39"/>
    <property type="match status" value="1"/>
</dbReference>
<dbReference type="InterPro" id="IPR001737">
    <property type="entry name" value="KsgA/Erm"/>
</dbReference>
<dbReference type="InterPro" id="IPR020596">
    <property type="entry name" value="rRNA_Ade_Mease_Trfase_CS"/>
</dbReference>
<dbReference type="InterPro" id="IPR020598">
    <property type="entry name" value="rRNA_Ade_methylase_Trfase_N"/>
</dbReference>
<dbReference type="InterPro" id="IPR011530">
    <property type="entry name" value="rRNA_adenine_dimethylase"/>
</dbReference>
<dbReference type="InterPro" id="IPR029063">
    <property type="entry name" value="SAM-dependent_MTases_sf"/>
</dbReference>
<dbReference type="NCBIfam" id="TIGR00755">
    <property type="entry name" value="ksgA"/>
    <property type="match status" value="1"/>
</dbReference>
<dbReference type="PANTHER" id="PTHR11727">
    <property type="entry name" value="DIMETHYLADENOSINE TRANSFERASE"/>
    <property type="match status" value="1"/>
</dbReference>
<dbReference type="PANTHER" id="PTHR11727:SF7">
    <property type="entry name" value="DIMETHYLADENOSINE TRANSFERASE-RELATED"/>
    <property type="match status" value="1"/>
</dbReference>
<dbReference type="Pfam" id="PF00398">
    <property type="entry name" value="RrnaAD"/>
    <property type="match status" value="1"/>
</dbReference>
<dbReference type="SMART" id="SM00650">
    <property type="entry name" value="rADc"/>
    <property type="match status" value="1"/>
</dbReference>
<dbReference type="SUPFAM" id="SSF53335">
    <property type="entry name" value="S-adenosyl-L-methionine-dependent methyltransferases"/>
    <property type="match status" value="1"/>
</dbReference>
<dbReference type="PROSITE" id="PS01131">
    <property type="entry name" value="RRNA_A_DIMETH"/>
    <property type="match status" value="1"/>
</dbReference>
<dbReference type="PROSITE" id="PS51689">
    <property type="entry name" value="SAM_RNA_A_N6_MT"/>
    <property type="match status" value="1"/>
</dbReference>
<feature type="chain" id="PRO_0000101463" description="Dimethyladenosine transferase">
    <location>
        <begin position="1"/>
        <end position="317"/>
    </location>
</feature>
<feature type="region of interest" description="Disordered" evidence="2">
    <location>
        <begin position="1"/>
        <end position="22"/>
    </location>
</feature>
<feature type="binding site" evidence="1">
    <location>
        <position position="37"/>
    </location>
    <ligand>
        <name>S-adenosyl-L-methionine</name>
        <dbReference type="ChEBI" id="CHEBI:59789"/>
    </ligand>
</feature>
<feature type="binding site" evidence="1">
    <location>
        <position position="39"/>
    </location>
    <ligand>
        <name>S-adenosyl-L-methionine</name>
        <dbReference type="ChEBI" id="CHEBI:59789"/>
    </ligand>
</feature>
<feature type="binding site" evidence="1">
    <location>
        <position position="64"/>
    </location>
    <ligand>
        <name>S-adenosyl-L-methionine</name>
        <dbReference type="ChEBI" id="CHEBI:59789"/>
    </ligand>
</feature>
<feature type="binding site" evidence="1">
    <location>
        <position position="85"/>
    </location>
    <ligand>
        <name>S-adenosyl-L-methionine</name>
        <dbReference type="ChEBI" id="CHEBI:59789"/>
    </ligand>
</feature>
<feature type="binding site" evidence="1">
    <location>
        <position position="113"/>
    </location>
    <ligand>
        <name>S-adenosyl-L-methionine</name>
        <dbReference type="ChEBI" id="CHEBI:59789"/>
    </ligand>
</feature>
<feature type="binding site" evidence="1">
    <location>
        <position position="128"/>
    </location>
    <ligand>
        <name>S-adenosyl-L-methionine</name>
        <dbReference type="ChEBI" id="CHEBI:59789"/>
    </ligand>
</feature>
<sequence>MAKAPAKKFSGGAQRESAGGEQRKTAVFKMNTDLGQHILKNPLVAQGIVDKSDIKPSDTVLEVGPGTGNLTVRILEKARKVIAVEMDPRMAAELTKRVQGKPEQKKLEIMLGDCIKTELPYFDVCISNTPYQISSPLVFKLLNQPRPPRVSVLMFQHEFAMRLLARPGDSLYCRLSVNVQMWAKVSHVMKVGRGNFRPPPNVESSVVKIEVKNPRPPIDFNEWDGLLRVCFVRKNKTINAGFKTSAVLAVLEKNYQTWLSTQGEIIPEGSNLSDVVKQKINKILTDTGIGEMRSAKCDQTEFLTLLNEFHKAGIYFA</sequence>
<organism>
    <name type="scientific">Yarrowia lipolytica (strain CLIB 122 / E 150)</name>
    <name type="common">Yeast</name>
    <name type="synonym">Candida lipolytica</name>
    <dbReference type="NCBI Taxonomy" id="284591"/>
    <lineage>
        <taxon>Eukaryota</taxon>
        <taxon>Fungi</taxon>
        <taxon>Dikarya</taxon>
        <taxon>Ascomycota</taxon>
        <taxon>Saccharomycotina</taxon>
        <taxon>Dipodascomycetes</taxon>
        <taxon>Dipodascales</taxon>
        <taxon>Dipodascales incertae sedis</taxon>
        <taxon>Yarrowia</taxon>
    </lineage>
</organism>
<gene>
    <name type="primary">DIM1</name>
    <name type="ordered locus">YALI0E00770g</name>
</gene>
<name>DIM1_YARLI</name>